<reference key="1">
    <citation type="submission" date="2006-03" db="EMBL/GenBank/DDBJ databases">
        <title>Complete sequence of chromosome of Nitrobacter hamburgensis X14.</title>
        <authorList>
            <consortium name="US DOE Joint Genome Institute"/>
            <person name="Copeland A."/>
            <person name="Lucas S."/>
            <person name="Lapidus A."/>
            <person name="Barry K."/>
            <person name="Detter J.C."/>
            <person name="Glavina del Rio T."/>
            <person name="Hammon N."/>
            <person name="Israni S."/>
            <person name="Dalin E."/>
            <person name="Tice H."/>
            <person name="Pitluck S."/>
            <person name="Chain P."/>
            <person name="Malfatti S."/>
            <person name="Shin M."/>
            <person name="Vergez L."/>
            <person name="Schmutz J."/>
            <person name="Larimer F."/>
            <person name="Land M."/>
            <person name="Hauser L."/>
            <person name="Kyrpides N."/>
            <person name="Ivanova N."/>
            <person name="Ward B."/>
            <person name="Arp D."/>
            <person name="Klotz M."/>
            <person name="Stein L."/>
            <person name="O'Mullan G."/>
            <person name="Starkenburg S."/>
            <person name="Sayavedra L."/>
            <person name="Poret-Peterson A.T."/>
            <person name="Gentry M.E."/>
            <person name="Bruce D."/>
            <person name="Richardson P."/>
        </authorList>
    </citation>
    <scope>NUCLEOTIDE SEQUENCE [LARGE SCALE GENOMIC DNA]</scope>
    <source>
        <strain>DSM 10229 / NCIMB 13809 / X14</strain>
    </source>
</reference>
<dbReference type="EMBL" id="CP000319">
    <property type="protein sequence ID" value="ABE64705.1"/>
    <property type="molecule type" value="Genomic_DNA"/>
</dbReference>
<dbReference type="RefSeq" id="WP_011512332.1">
    <property type="nucleotide sequence ID" value="NC_007964.1"/>
</dbReference>
<dbReference type="SMR" id="Q1QGE2"/>
<dbReference type="STRING" id="323097.Nham_4039"/>
<dbReference type="KEGG" id="nha:Nham_4039"/>
<dbReference type="eggNOG" id="COG0268">
    <property type="taxonomic scope" value="Bacteria"/>
</dbReference>
<dbReference type="HOGENOM" id="CLU_160655_3_0_5"/>
<dbReference type="OrthoDB" id="9807974at2"/>
<dbReference type="Proteomes" id="UP000001953">
    <property type="component" value="Chromosome"/>
</dbReference>
<dbReference type="GO" id="GO:0005829">
    <property type="term" value="C:cytosol"/>
    <property type="evidence" value="ECO:0007669"/>
    <property type="project" value="TreeGrafter"/>
</dbReference>
<dbReference type="GO" id="GO:0015935">
    <property type="term" value="C:small ribosomal subunit"/>
    <property type="evidence" value="ECO:0007669"/>
    <property type="project" value="TreeGrafter"/>
</dbReference>
<dbReference type="GO" id="GO:0070181">
    <property type="term" value="F:small ribosomal subunit rRNA binding"/>
    <property type="evidence" value="ECO:0007669"/>
    <property type="project" value="TreeGrafter"/>
</dbReference>
<dbReference type="GO" id="GO:0003735">
    <property type="term" value="F:structural constituent of ribosome"/>
    <property type="evidence" value="ECO:0007669"/>
    <property type="project" value="InterPro"/>
</dbReference>
<dbReference type="GO" id="GO:0006412">
    <property type="term" value="P:translation"/>
    <property type="evidence" value="ECO:0007669"/>
    <property type="project" value="UniProtKB-UniRule"/>
</dbReference>
<dbReference type="Gene3D" id="1.20.58.110">
    <property type="entry name" value="Ribosomal protein S20"/>
    <property type="match status" value="1"/>
</dbReference>
<dbReference type="HAMAP" id="MF_00500">
    <property type="entry name" value="Ribosomal_bS20"/>
    <property type="match status" value="1"/>
</dbReference>
<dbReference type="InterPro" id="IPR002583">
    <property type="entry name" value="Ribosomal_bS20"/>
</dbReference>
<dbReference type="InterPro" id="IPR036510">
    <property type="entry name" value="Ribosomal_bS20_sf"/>
</dbReference>
<dbReference type="NCBIfam" id="TIGR00029">
    <property type="entry name" value="S20"/>
    <property type="match status" value="1"/>
</dbReference>
<dbReference type="PANTHER" id="PTHR33398">
    <property type="entry name" value="30S RIBOSOMAL PROTEIN S20"/>
    <property type="match status" value="1"/>
</dbReference>
<dbReference type="PANTHER" id="PTHR33398:SF1">
    <property type="entry name" value="SMALL RIBOSOMAL SUBUNIT PROTEIN BS20C"/>
    <property type="match status" value="1"/>
</dbReference>
<dbReference type="Pfam" id="PF01649">
    <property type="entry name" value="Ribosomal_S20p"/>
    <property type="match status" value="1"/>
</dbReference>
<dbReference type="SUPFAM" id="SSF46992">
    <property type="entry name" value="Ribosomal protein S20"/>
    <property type="match status" value="1"/>
</dbReference>
<sequence>MANTHSAKKATRKITRRTAVNKSRRTLMRGSVRIVEEAIAKGDRDAAIQAMKRAEPELMRAGQQNIVHKNSASRKVSRLTHRIAKLAK</sequence>
<accession>Q1QGE2</accession>
<feature type="chain" id="PRO_0000260129" description="Small ribosomal subunit protein bS20">
    <location>
        <begin position="1"/>
        <end position="88"/>
    </location>
</feature>
<feature type="region of interest" description="Disordered" evidence="2">
    <location>
        <begin position="1"/>
        <end position="20"/>
    </location>
</feature>
<feature type="compositionally biased region" description="Basic residues" evidence="2">
    <location>
        <begin position="1"/>
        <end position="16"/>
    </location>
</feature>
<proteinExistence type="inferred from homology"/>
<evidence type="ECO:0000255" key="1">
    <source>
        <dbReference type="HAMAP-Rule" id="MF_00500"/>
    </source>
</evidence>
<evidence type="ECO:0000256" key="2">
    <source>
        <dbReference type="SAM" id="MobiDB-lite"/>
    </source>
</evidence>
<evidence type="ECO:0000305" key="3"/>
<protein>
    <recommendedName>
        <fullName evidence="1">Small ribosomal subunit protein bS20</fullName>
    </recommendedName>
    <alternativeName>
        <fullName evidence="3">30S ribosomal protein S20</fullName>
    </alternativeName>
</protein>
<organism>
    <name type="scientific">Nitrobacter hamburgensis (strain DSM 10229 / NCIMB 13809 / X14)</name>
    <dbReference type="NCBI Taxonomy" id="323097"/>
    <lineage>
        <taxon>Bacteria</taxon>
        <taxon>Pseudomonadati</taxon>
        <taxon>Pseudomonadota</taxon>
        <taxon>Alphaproteobacteria</taxon>
        <taxon>Hyphomicrobiales</taxon>
        <taxon>Nitrobacteraceae</taxon>
        <taxon>Nitrobacter</taxon>
    </lineage>
</organism>
<comment type="function">
    <text evidence="1">Binds directly to 16S ribosomal RNA.</text>
</comment>
<comment type="similarity">
    <text evidence="1">Belongs to the bacterial ribosomal protein bS20 family.</text>
</comment>
<keyword id="KW-1185">Reference proteome</keyword>
<keyword id="KW-0687">Ribonucleoprotein</keyword>
<keyword id="KW-0689">Ribosomal protein</keyword>
<keyword id="KW-0694">RNA-binding</keyword>
<keyword id="KW-0699">rRNA-binding</keyword>
<gene>
    <name evidence="1" type="primary">rpsT</name>
    <name type="ordered locus">Nham_4039</name>
</gene>
<name>RS20_NITHX</name>